<dbReference type="EMBL" id="BA000034">
    <property type="protein sequence ID" value="BAC64476.1"/>
    <property type="status" value="ALT_INIT"/>
    <property type="molecule type" value="Genomic_DNA"/>
</dbReference>
<dbReference type="RefSeq" id="WP_002985298.1">
    <property type="nucleotide sequence ID" value="NC_004606.1"/>
</dbReference>
<dbReference type="SMR" id="P0DE15"/>
<dbReference type="GeneID" id="69901140"/>
<dbReference type="KEGG" id="sps:SPs1381"/>
<dbReference type="HOGENOM" id="CLU_204196_0_0_9"/>
<dbReference type="GO" id="GO:0022625">
    <property type="term" value="C:cytosolic large ribosomal subunit"/>
    <property type="evidence" value="ECO:0007669"/>
    <property type="project" value="TreeGrafter"/>
</dbReference>
<dbReference type="GO" id="GO:0003735">
    <property type="term" value="F:structural constituent of ribosome"/>
    <property type="evidence" value="ECO:0007669"/>
    <property type="project" value="InterPro"/>
</dbReference>
<dbReference type="GO" id="GO:0006412">
    <property type="term" value="P:translation"/>
    <property type="evidence" value="ECO:0007669"/>
    <property type="project" value="UniProtKB-UniRule"/>
</dbReference>
<dbReference type="FunFam" id="2.30.30.790:FF:000001">
    <property type="entry name" value="50S ribosomal protein L19"/>
    <property type="match status" value="1"/>
</dbReference>
<dbReference type="Gene3D" id="2.30.30.790">
    <property type="match status" value="1"/>
</dbReference>
<dbReference type="HAMAP" id="MF_00402">
    <property type="entry name" value="Ribosomal_bL19"/>
    <property type="match status" value="1"/>
</dbReference>
<dbReference type="InterPro" id="IPR001857">
    <property type="entry name" value="Ribosomal_bL19"/>
</dbReference>
<dbReference type="InterPro" id="IPR018257">
    <property type="entry name" value="Ribosomal_bL19_CS"/>
</dbReference>
<dbReference type="InterPro" id="IPR038657">
    <property type="entry name" value="Ribosomal_bL19_sf"/>
</dbReference>
<dbReference type="InterPro" id="IPR008991">
    <property type="entry name" value="Translation_prot_SH3-like_sf"/>
</dbReference>
<dbReference type="NCBIfam" id="TIGR01024">
    <property type="entry name" value="rplS_bact"/>
    <property type="match status" value="1"/>
</dbReference>
<dbReference type="PANTHER" id="PTHR15680:SF9">
    <property type="entry name" value="LARGE RIBOSOMAL SUBUNIT PROTEIN BL19M"/>
    <property type="match status" value="1"/>
</dbReference>
<dbReference type="PANTHER" id="PTHR15680">
    <property type="entry name" value="RIBOSOMAL PROTEIN L19"/>
    <property type="match status" value="1"/>
</dbReference>
<dbReference type="Pfam" id="PF01245">
    <property type="entry name" value="Ribosomal_L19"/>
    <property type="match status" value="1"/>
</dbReference>
<dbReference type="PIRSF" id="PIRSF002191">
    <property type="entry name" value="Ribosomal_L19"/>
    <property type="match status" value="1"/>
</dbReference>
<dbReference type="PRINTS" id="PR00061">
    <property type="entry name" value="RIBOSOMALL19"/>
</dbReference>
<dbReference type="SUPFAM" id="SSF50104">
    <property type="entry name" value="Translation proteins SH3-like domain"/>
    <property type="match status" value="1"/>
</dbReference>
<dbReference type="PROSITE" id="PS01015">
    <property type="entry name" value="RIBOSOMAL_L19"/>
    <property type="match status" value="1"/>
</dbReference>
<feature type="chain" id="PRO_0000411497" description="Large ribosomal subunit protein bL19">
    <location>
        <begin position="1"/>
        <end position="115"/>
    </location>
</feature>
<organism>
    <name type="scientific">Streptococcus pyogenes serotype M3 (strain SSI-1)</name>
    <dbReference type="NCBI Taxonomy" id="193567"/>
    <lineage>
        <taxon>Bacteria</taxon>
        <taxon>Bacillati</taxon>
        <taxon>Bacillota</taxon>
        <taxon>Bacilli</taxon>
        <taxon>Lactobacillales</taxon>
        <taxon>Streptococcaceae</taxon>
        <taxon>Streptococcus</taxon>
    </lineage>
</organism>
<proteinExistence type="inferred from homology"/>
<sequence length="115" mass="13145">MNPLIQSLTEGQLRSDIPNFRPGDTVRVHAKVVEGTRERIQIFEGVVISRKGQGISEMYTVRKISGGIGVERTFPIHTPRVDKIEVIRHGKVRRAKLYYLRALQGKAARIKEIRR</sequence>
<gene>
    <name evidence="1" type="primary">rplS</name>
    <name evidence="1" type="synonym">rpl19</name>
    <name type="ordered locus">SPs1381</name>
</gene>
<name>RL19_STRPQ</name>
<comment type="function">
    <text evidence="1">This protein is located at the 30S-50S ribosomal subunit interface and may play a role in the structure and function of the aminoacyl-tRNA binding site.</text>
</comment>
<comment type="similarity">
    <text evidence="1">Belongs to the bacterial ribosomal protein bL19 family.</text>
</comment>
<comment type="sequence caution" evidence="2">
    <conflict type="erroneous initiation">
        <sequence resource="EMBL-CDS" id="BAC64476"/>
    </conflict>
</comment>
<protein>
    <recommendedName>
        <fullName evidence="1">Large ribosomal subunit protein bL19</fullName>
    </recommendedName>
    <alternativeName>
        <fullName evidence="2">50S ribosomal protein L19</fullName>
    </alternativeName>
</protein>
<accession>P0DE15</accession>
<accession>P58169</accession>
<accession>P66085</accession>
<keyword id="KW-0687">Ribonucleoprotein</keyword>
<keyword id="KW-0689">Ribosomal protein</keyword>
<reference key="1">
    <citation type="journal article" date="2003" name="Genome Res.">
        <title>Genome sequence of an M3 strain of Streptococcus pyogenes reveals a large-scale genomic rearrangement in invasive strains and new insights into phage evolution.</title>
        <authorList>
            <person name="Nakagawa I."/>
            <person name="Kurokawa K."/>
            <person name="Yamashita A."/>
            <person name="Nakata M."/>
            <person name="Tomiyasu Y."/>
            <person name="Okahashi N."/>
            <person name="Kawabata S."/>
            <person name="Yamazaki K."/>
            <person name="Shiba T."/>
            <person name="Yasunaga T."/>
            <person name="Hayashi H."/>
            <person name="Hattori M."/>
            <person name="Hamada S."/>
        </authorList>
    </citation>
    <scope>NUCLEOTIDE SEQUENCE [LARGE SCALE GENOMIC DNA]</scope>
    <source>
        <strain>SSI-1</strain>
    </source>
</reference>
<evidence type="ECO:0000255" key="1">
    <source>
        <dbReference type="HAMAP-Rule" id="MF_00402"/>
    </source>
</evidence>
<evidence type="ECO:0000305" key="2"/>